<sequence length="251" mass="25248">MQPGGTAGPEEAPMREAEAGPPQVGLSRPTCSLPASSPGPALPPGCVSRPDSGLPTTSLDSAPAQLPAALVDPQLPEAKLPRPSSGLTVASPGSAPALRWHLQAPNGLRSVGSSRPSLGLPAASAGPKRPEVGLSRPSSGLPAAFAGPSRPQVGLELGLEEQQVSLSGPSSILSAASPGAKLPRVSLSRPSSSCLPLASFSPAQPSSWLSAAFPGPAFDFWRPLQAQNLPSSGPLQARPRPRPHSGLSTPS</sequence>
<dbReference type="EMBL" id="AK128746">
    <property type="protein sequence ID" value="BAC87596.1"/>
    <property type="molecule type" value="mRNA"/>
</dbReference>
<dbReference type="BioMuta" id="-"/>
<dbReference type="DMDM" id="74710975"/>
<dbReference type="neXtProt" id="NX_Q6ZQT7"/>
<dbReference type="InParanoid" id="Q6ZQT7"/>
<dbReference type="PAN-GO" id="Q6ZQT7">
    <property type="GO annotations" value="0 GO annotations based on evolutionary models"/>
</dbReference>
<dbReference type="PhylomeDB" id="Q6ZQT7"/>
<dbReference type="Pharos" id="Q6ZQT7">
    <property type="development level" value="Tdark"/>
</dbReference>
<dbReference type="Proteomes" id="UP000005640">
    <property type="component" value="Unplaced"/>
</dbReference>
<dbReference type="RNAct" id="Q6ZQT7">
    <property type="molecule type" value="protein"/>
</dbReference>
<dbReference type="InterPro" id="IPR031572">
    <property type="entry name" value="DUF4705"/>
</dbReference>
<dbReference type="PANTHER" id="PTHR37553">
    <property type="entry name" value="DUF4705 DOMAIN-CONTAINING PROTEIN"/>
    <property type="match status" value="1"/>
</dbReference>
<dbReference type="PANTHER" id="PTHR37553:SF7">
    <property type="entry name" value="DUF4705 DOMAIN-CONTAINING PROTEIN"/>
    <property type="match status" value="1"/>
</dbReference>
<dbReference type="Pfam" id="PF15788">
    <property type="entry name" value="DUF4705"/>
    <property type="match status" value="4"/>
</dbReference>
<feature type="chain" id="PRO_0000342145" description="Putative uncharacterized protein FLJ44672">
    <location>
        <begin position="1"/>
        <end position="251"/>
    </location>
</feature>
<feature type="region of interest" description="Disordered" evidence="1">
    <location>
        <begin position="1"/>
        <end position="93"/>
    </location>
</feature>
<feature type="region of interest" description="Disordered" evidence="1">
    <location>
        <begin position="107"/>
        <end position="152"/>
    </location>
</feature>
<feature type="region of interest" description="Disordered" evidence="1">
    <location>
        <begin position="169"/>
        <end position="188"/>
    </location>
</feature>
<feature type="region of interest" description="Disordered" evidence="1">
    <location>
        <begin position="224"/>
        <end position="251"/>
    </location>
</feature>
<feature type="compositionally biased region" description="Polar residues" evidence="1">
    <location>
        <begin position="225"/>
        <end position="234"/>
    </location>
</feature>
<reference key="1">
    <citation type="journal article" date="2004" name="Nat. Genet.">
        <title>Complete sequencing and characterization of 21,243 full-length human cDNAs.</title>
        <authorList>
            <person name="Ota T."/>
            <person name="Suzuki Y."/>
            <person name="Nishikawa T."/>
            <person name="Otsuki T."/>
            <person name="Sugiyama T."/>
            <person name="Irie R."/>
            <person name="Wakamatsu A."/>
            <person name="Hayashi K."/>
            <person name="Sato H."/>
            <person name="Nagai K."/>
            <person name="Kimura K."/>
            <person name="Makita H."/>
            <person name="Sekine M."/>
            <person name="Obayashi M."/>
            <person name="Nishi T."/>
            <person name="Shibahara T."/>
            <person name="Tanaka T."/>
            <person name="Ishii S."/>
            <person name="Yamamoto J."/>
            <person name="Saito K."/>
            <person name="Kawai Y."/>
            <person name="Isono Y."/>
            <person name="Nakamura Y."/>
            <person name="Nagahari K."/>
            <person name="Murakami K."/>
            <person name="Yasuda T."/>
            <person name="Iwayanagi T."/>
            <person name="Wagatsuma M."/>
            <person name="Shiratori A."/>
            <person name="Sudo H."/>
            <person name="Hosoiri T."/>
            <person name="Kaku Y."/>
            <person name="Kodaira H."/>
            <person name="Kondo H."/>
            <person name="Sugawara M."/>
            <person name="Takahashi M."/>
            <person name="Kanda K."/>
            <person name="Yokoi T."/>
            <person name="Furuya T."/>
            <person name="Kikkawa E."/>
            <person name="Omura Y."/>
            <person name="Abe K."/>
            <person name="Kamihara K."/>
            <person name="Katsuta N."/>
            <person name="Sato K."/>
            <person name="Tanikawa M."/>
            <person name="Yamazaki M."/>
            <person name="Ninomiya K."/>
            <person name="Ishibashi T."/>
            <person name="Yamashita H."/>
            <person name="Murakawa K."/>
            <person name="Fujimori K."/>
            <person name="Tanai H."/>
            <person name="Kimata M."/>
            <person name="Watanabe M."/>
            <person name="Hiraoka S."/>
            <person name="Chiba Y."/>
            <person name="Ishida S."/>
            <person name="Ono Y."/>
            <person name="Takiguchi S."/>
            <person name="Watanabe S."/>
            <person name="Yosida M."/>
            <person name="Hotuta T."/>
            <person name="Kusano J."/>
            <person name="Kanehori K."/>
            <person name="Takahashi-Fujii A."/>
            <person name="Hara H."/>
            <person name="Tanase T.-O."/>
            <person name="Nomura Y."/>
            <person name="Togiya S."/>
            <person name="Komai F."/>
            <person name="Hara R."/>
            <person name="Takeuchi K."/>
            <person name="Arita M."/>
            <person name="Imose N."/>
            <person name="Musashino K."/>
            <person name="Yuuki H."/>
            <person name="Oshima A."/>
            <person name="Sasaki N."/>
            <person name="Aotsuka S."/>
            <person name="Yoshikawa Y."/>
            <person name="Matsunawa H."/>
            <person name="Ichihara T."/>
            <person name="Shiohata N."/>
            <person name="Sano S."/>
            <person name="Moriya S."/>
            <person name="Momiyama H."/>
            <person name="Satoh N."/>
            <person name="Takami S."/>
            <person name="Terashima Y."/>
            <person name="Suzuki O."/>
            <person name="Nakagawa S."/>
            <person name="Senoh A."/>
            <person name="Mizoguchi H."/>
            <person name="Goto Y."/>
            <person name="Shimizu F."/>
            <person name="Wakebe H."/>
            <person name="Hishigaki H."/>
            <person name="Watanabe T."/>
            <person name="Sugiyama A."/>
            <person name="Takemoto M."/>
            <person name="Kawakami B."/>
            <person name="Yamazaki M."/>
            <person name="Watanabe K."/>
            <person name="Kumagai A."/>
            <person name="Itakura S."/>
            <person name="Fukuzumi Y."/>
            <person name="Fujimori Y."/>
            <person name="Komiyama M."/>
            <person name="Tashiro H."/>
            <person name="Tanigami A."/>
            <person name="Fujiwara T."/>
            <person name="Ono T."/>
            <person name="Yamada K."/>
            <person name="Fujii Y."/>
            <person name="Ozaki K."/>
            <person name="Hirao M."/>
            <person name="Ohmori Y."/>
            <person name="Kawabata A."/>
            <person name="Hikiji T."/>
            <person name="Kobatake N."/>
            <person name="Inagaki H."/>
            <person name="Ikema Y."/>
            <person name="Okamoto S."/>
            <person name="Okitani R."/>
            <person name="Kawakami T."/>
            <person name="Noguchi S."/>
            <person name="Itoh T."/>
            <person name="Shigeta K."/>
            <person name="Senba T."/>
            <person name="Matsumura K."/>
            <person name="Nakajima Y."/>
            <person name="Mizuno T."/>
            <person name="Morinaga M."/>
            <person name="Sasaki M."/>
            <person name="Togashi T."/>
            <person name="Oyama M."/>
            <person name="Hata H."/>
            <person name="Watanabe M."/>
            <person name="Komatsu T."/>
            <person name="Mizushima-Sugano J."/>
            <person name="Satoh T."/>
            <person name="Shirai Y."/>
            <person name="Takahashi Y."/>
            <person name="Nakagawa K."/>
            <person name="Okumura K."/>
            <person name="Nagase T."/>
            <person name="Nomura N."/>
            <person name="Kikuchi H."/>
            <person name="Masuho Y."/>
            <person name="Yamashita R."/>
            <person name="Nakai K."/>
            <person name="Yada T."/>
            <person name="Nakamura Y."/>
            <person name="Ohara O."/>
            <person name="Isogai T."/>
            <person name="Sugano S."/>
        </authorList>
    </citation>
    <scope>NUCLEOTIDE SEQUENCE [LARGE SCALE MRNA]</scope>
    <source>
        <tissue>Cerebellum</tissue>
    </source>
</reference>
<proteinExistence type="evidence at transcript level"/>
<name>YJ013_HUMAN</name>
<accession>Q6ZQT7</accession>
<protein>
    <recommendedName>
        <fullName>Putative uncharacterized protein FLJ44672</fullName>
    </recommendedName>
</protein>
<keyword id="KW-1185">Reference proteome</keyword>
<organism>
    <name type="scientific">Homo sapiens</name>
    <name type="common">Human</name>
    <dbReference type="NCBI Taxonomy" id="9606"/>
    <lineage>
        <taxon>Eukaryota</taxon>
        <taxon>Metazoa</taxon>
        <taxon>Chordata</taxon>
        <taxon>Craniata</taxon>
        <taxon>Vertebrata</taxon>
        <taxon>Euteleostomi</taxon>
        <taxon>Mammalia</taxon>
        <taxon>Eutheria</taxon>
        <taxon>Euarchontoglires</taxon>
        <taxon>Primates</taxon>
        <taxon>Haplorrhini</taxon>
        <taxon>Catarrhini</taxon>
        <taxon>Hominidae</taxon>
        <taxon>Homo</taxon>
    </lineage>
</organism>
<evidence type="ECO:0000256" key="1">
    <source>
        <dbReference type="SAM" id="MobiDB-lite"/>
    </source>
</evidence>